<keyword id="KW-0963">Cytoplasm</keyword>
<keyword id="KW-0664">Pyridoxine biosynthesis</keyword>
<keyword id="KW-0808">Transferase</keyword>
<reference key="1">
    <citation type="journal article" date="2009" name="PLoS Genet.">
        <title>Adaptations to submarine hydrothermal environments exemplified by the genome of Nautilia profundicola.</title>
        <authorList>
            <person name="Campbell B.J."/>
            <person name="Smith J.L."/>
            <person name="Hanson T.E."/>
            <person name="Klotz M.G."/>
            <person name="Stein L.Y."/>
            <person name="Lee C.K."/>
            <person name="Wu D."/>
            <person name="Robinson J.M."/>
            <person name="Khouri H.M."/>
            <person name="Eisen J.A."/>
            <person name="Cary S.C."/>
        </authorList>
    </citation>
    <scope>NUCLEOTIDE SEQUENCE [LARGE SCALE GENOMIC DNA]</scope>
    <source>
        <strain>ATCC BAA-1463 / DSM 18972 / AmH</strain>
    </source>
</reference>
<proteinExistence type="inferred from homology"/>
<dbReference type="EC" id="2.6.99.2" evidence="1"/>
<dbReference type="EMBL" id="CP001279">
    <property type="protein sequence ID" value="ACM92474.1"/>
    <property type="molecule type" value="Genomic_DNA"/>
</dbReference>
<dbReference type="RefSeq" id="WP_012663845.1">
    <property type="nucleotide sequence ID" value="NC_012115.1"/>
</dbReference>
<dbReference type="SMR" id="B9LAE4"/>
<dbReference type="STRING" id="598659.NAMH_1208"/>
<dbReference type="KEGG" id="nam:NAMH_1208"/>
<dbReference type="eggNOG" id="COG0854">
    <property type="taxonomic scope" value="Bacteria"/>
</dbReference>
<dbReference type="HOGENOM" id="CLU_074563_0_0_7"/>
<dbReference type="OrthoDB" id="9806590at2"/>
<dbReference type="UniPathway" id="UPA00244">
    <property type="reaction ID" value="UER00313"/>
</dbReference>
<dbReference type="Proteomes" id="UP000000448">
    <property type="component" value="Chromosome"/>
</dbReference>
<dbReference type="GO" id="GO:0005829">
    <property type="term" value="C:cytosol"/>
    <property type="evidence" value="ECO:0007669"/>
    <property type="project" value="TreeGrafter"/>
</dbReference>
<dbReference type="GO" id="GO:0033856">
    <property type="term" value="F:pyridoxine 5'-phosphate synthase activity"/>
    <property type="evidence" value="ECO:0007669"/>
    <property type="project" value="UniProtKB-EC"/>
</dbReference>
<dbReference type="GO" id="GO:0008615">
    <property type="term" value="P:pyridoxine biosynthetic process"/>
    <property type="evidence" value="ECO:0007669"/>
    <property type="project" value="UniProtKB-UniRule"/>
</dbReference>
<dbReference type="CDD" id="cd00003">
    <property type="entry name" value="PNPsynthase"/>
    <property type="match status" value="1"/>
</dbReference>
<dbReference type="Gene3D" id="3.20.20.70">
    <property type="entry name" value="Aldolase class I"/>
    <property type="match status" value="1"/>
</dbReference>
<dbReference type="HAMAP" id="MF_00279">
    <property type="entry name" value="PdxJ"/>
    <property type="match status" value="1"/>
</dbReference>
<dbReference type="InterPro" id="IPR013785">
    <property type="entry name" value="Aldolase_TIM"/>
</dbReference>
<dbReference type="InterPro" id="IPR004569">
    <property type="entry name" value="PyrdxlP_synth_PdxJ"/>
</dbReference>
<dbReference type="InterPro" id="IPR036130">
    <property type="entry name" value="Pyridoxine-5'_phos_synth"/>
</dbReference>
<dbReference type="NCBIfam" id="TIGR00559">
    <property type="entry name" value="pdxJ"/>
    <property type="match status" value="1"/>
</dbReference>
<dbReference type="NCBIfam" id="NF003625">
    <property type="entry name" value="PRK05265.1-3"/>
    <property type="match status" value="1"/>
</dbReference>
<dbReference type="NCBIfam" id="NF003627">
    <property type="entry name" value="PRK05265.1-5"/>
    <property type="match status" value="1"/>
</dbReference>
<dbReference type="PANTHER" id="PTHR30456">
    <property type="entry name" value="PYRIDOXINE 5'-PHOSPHATE SYNTHASE"/>
    <property type="match status" value="1"/>
</dbReference>
<dbReference type="PANTHER" id="PTHR30456:SF0">
    <property type="entry name" value="PYRIDOXINE 5'-PHOSPHATE SYNTHASE"/>
    <property type="match status" value="1"/>
</dbReference>
<dbReference type="Pfam" id="PF03740">
    <property type="entry name" value="PdxJ"/>
    <property type="match status" value="1"/>
</dbReference>
<dbReference type="SUPFAM" id="SSF63892">
    <property type="entry name" value="Pyridoxine 5'-phosphate synthase"/>
    <property type="match status" value="1"/>
</dbReference>
<feature type="chain" id="PRO_1000132550" description="Pyridoxine 5'-phosphate synthase">
    <location>
        <begin position="1"/>
        <end position="259"/>
    </location>
</feature>
<feature type="active site" description="Proton acceptor" evidence="1">
    <location>
        <position position="42"/>
    </location>
</feature>
<feature type="active site" description="Proton acceptor" evidence="1">
    <location>
        <position position="69"/>
    </location>
</feature>
<feature type="active site" description="Proton donor" evidence="1">
    <location>
        <position position="212"/>
    </location>
</feature>
<feature type="binding site" evidence="1">
    <location>
        <position position="6"/>
    </location>
    <ligand>
        <name>3-amino-2-oxopropyl phosphate</name>
        <dbReference type="ChEBI" id="CHEBI:57279"/>
    </ligand>
</feature>
<feature type="binding site" evidence="1">
    <location>
        <begin position="8"/>
        <end position="9"/>
    </location>
    <ligand>
        <name>1-deoxy-D-xylulose 5-phosphate</name>
        <dbReference type="ChEBI" id="CHEBI:57792"/>
    </ligand>
</feature>
<feature type="binding site" evidence="1">
    <location>
        <position position="17"/>
    </location>
    <ligand>
        <name>3-amino-2-oxopropyl phosphate</name>
        <dbReference type="ChEBI" id="CHEBI:57279"/>
    </ligand>
</feature>
<feature type="binding site" evidence="1">
    <location>
        <position position="44"/>
    </location>
    <ligand>
        <name>1-deoxy-D-xylulose 5-phosphate</name>
        <dbReference type="ChEBI" id="CHEBI:57792"/>
    </ligand>
</feature>
<feature type="binding site" evidence="1">
    <location>
        <position position="49"/>
    </location>
    <ligand>
        <name>1-deoxy-D-xylulose 5-phosphate</name>
        <dbReference type="ChEBI" id="CHEBI:57792"/>
    </ligand>
</feature>
<feature type="binding site" evidence="1">
    <location>
        <position position="99"/>
    </location>
    <ligand>
        <name>1-deoxy-D-xylulose 5-phosphate</name>
        <dbReference type="ChEBI" id="CHEBI:57792"/>
    </ligand>
</feature>
<feature type="binding site" evidence="1">
    <location>
        <position position="213"/>
    </location>
    <ligand>
        <name>3-amino-2-oxopropyl phosphate</name>
        <dbReference type="ChEBI" id="CHEBI:57279"/>
    </ligand>
</feature>
<feature type="binding site" evidence="1">
    <location>
        <begin position="234"/>
        <end position="235"/>
    </location>
    <ligand>
        <name>3-amino-2-oxopropyl phosphate</name>
        <dbReference type="ChEBI" id="CHEBI:57279"/>
    </ligand>
</feature>
<feature type="site" description="Transition state stabilizer" evidence="1">
    <location>
        <position position="150"/>
    </location>
</feature>
<name>PDXJ_NAUPA</name>
<gene>
    <name evidence="1" type="primary">pdxJ</name>
    <name type="ordered locus">NAMH_1208</name>
</gene>
<evidence type="ECO:0000255" key="1">
    <source>
        <dbReference type="HAMAP-Rule" id="MF_00279"/>
    </source>
</evidence>
<accession>B9LAE4</accession>
<protein>
    <recommendedName>
        <fullName evidence="1">Pyridoxine 5'-phosphate synthase</fullName>
        <shortName evidence="1">PNP synthase</shortName>
        <ecNumber evidence="1">2.6.99.2</ecNumber>
    </recommendedName>
</protein>
<sequence>MKLGVNIDHIATIRNARQINEPDPLMALQILKEAGADQVTIHLREDRRHITDFDAGRICQNSFLPVNMECSINPEIIDIICSLKPHRATLVPEKREEVTTEGGLDIIKFEKEIKNAIEKLHNNDIEVSLFIDPDFEQITKSAEVGAEMIELHTGKYANLHLALNTNINSTPFKVFENMDRKTLKKELELELKLLKDATILGNELGLEVAAGHGLNYQNVKPVADIEGIVELNIGHSIIANSVFLGLKQAIIQMRELING</sequence>
<comment type="function">
    <text evidence="1">Catalyzes the complicated ring closure reaction between the two acyclic compounds 1-deoxy-D-xylulose-5-phosphate (DXP) and 3-amino-2-oxopropyl phosphate (1-amino-acetone-3-phosphate or AAP) to form pyridoxine 5'-phosphate (PNP) and inorganic phosphate.</text>
</comment>
<comment type="catalytic activity">
    <reaction evidence="1">
        <text>3-amino-2-oxopropyl phosphate + 1-deoxy-D-xylulose 5-phosphate = pyridoxine 5'-phosphate + phosphate + 2 H2O + H(+)</text>
        <dbReference type="Rhea" id="RHEA:15265"/>
        <dbReference type="ChEBI" id="CHEBI:15377"/>
        <dbReference type="ChEBI" id="CHEBI:15378"/>
        <dbReference type="ChEBI" id="CHEBI:43474"/>
        <dbReference type="ChEBI" id="CHEBI:57279"/>
        <dbReference type="ChEBI" id="CHEBI:57792"/>
        <dbReference type="ChEBI" id="CHEBI:58589"/>
        <dbReference type="EC" id="2.6.99.2"/>
    </reaction>
</comment>
<comment type="pathway">
    <text evidence="1">Cofactor biosynthesis; pyridoxine 5'-phosphate biosynthesis; pyridoxine 5'-phosphate from D-erythrose 4-phosphate: step 5/5.</text>
</comment>
<comment type="subunit">
    <text evidence="1">Homooctamer; tetramer of dimers.</text>
</comment>
<comment type="subcellular location">
    <subcellularLocation>
        <location evidence="1">Cytoplasm</location>
    </subcellularLocation>
</comment>
<comment type="similarity">
    <text evidence="1">Belongs to the PNP synthase family.</text>
</comment>
<organism>
    <name type="scientific">Nautilia profundicola (strain ATCC BAA-1463 / DSM 18972 / AmH)</name>
    <dbReference type="NCBI Taxonomy" id="598659"/>
    <lineage>
        <taxon>Bacteria</taxon>
        <taxon>Pseudomonadati</taxon>
        <taxon>Campylobacterota</taxon>
        <taxon>Epsilonproteobacteria</taxon>
        <taxon>Nautiliales</taxon>
        <taxon>Nautiliaceae</taxon>
        <taxon>Nautilia</taxon>
    </lineage>
</organism>